<accession>Q8DHN1</accession>
<evidence type="ECO:0000255" key="1">
    <source>
        <dbReference type="HAMAP-Rule" id="MF_00340"/>
    </source>
</evidence>
<evidence type="ECO:0000256" key="2">
    <source>
        <dbReference type="SAM" id="MobiDB-lite"/>
    </source>
</evidence>
<evidence type="ECO:0000305" key="3"/>
<feature type="chain" id="PRO_0000172422" description="Large ribosomal subunit protein bL32">
    <location>
        <begin position="1"/>
        <end position="60"/>
    </location>
</feature>
<feature type="region of interest" description="Disordered" evidence="2">
    <location>
        <begin position="1"/>
        <end position="22"/>
    </location>
</feature>
<feature type="compositionally biased region" description="Basic residues" evidence="2">
    <location>
        <begin position="1"/>
        <end position="20"/>
    </location>
</feature>
<dbReference type="EMBL" id="BA000039">
    <property type="protein sequence ID" value="BAC09467.1"/>
    <property type="molecule type" value="Genomic_DNA"/>
</dbReference>
<dbReference type="RefSeq" id="NP_682705.1">
    <property type="nucleotide sequence ID" value="NC_004113.1"/>
</dbReference>
<dbReference type="RefSeq" id="WP_011057752.1">
    <property type="nucleotide sequence ID" value="NC_004113.1"/>
</dbReference>
<dbReference type="SMR" id="Q8DHN1"/>
<dbReference type="STRING" id="197221.gene:10748521"/>
<dbReference type="EnsemblBacteria" id="BAC09467">
    <property type="protein sequence ID" value="BAC09467"/>
    <property type="gene ID" value="BAC09467"/>
</dbReference>
<dbReference type="KEGG" id="tel:tsr1915"/>
<dbReference type="PATRIC" id="fig|197221.4.peg.2003"/>
<dbReference type="eggNOG" id="COG0333">
    <property type="taxonomic scope" value="Bacteria"/>
</dbReference>
<dbReference type="Proteomes" id="UP000000440">
    <property type="component" value="Chromosome"/>
</dbReference>
<dbReference type="GO" id="GO:0015934">
    <property type="term" value="C:large ribosomal subunit"/>
    <property type="evidence" value="ECO:0007669"/>
    <property type="project" value="InterPro"/>
</dbReference>
<dbReference type="GO" id="GO:0003735">
    <property type="term" value="F:structural constituent of ribosome"/>
    <property type="evidence" value="ECO:0007669"/>
    <property type="project" value="InterPro"/>
</dbReference>
<dbReference type="GO" id="GO:0006412">
    <property type="term" value="P:translation"/>
    <property type="evidence" value="ECO:0007669"/>
    <property type="project" value="UniProtKB-UniRule"/>
</dbReference>
<dbReference type="Gene3D" id="1.20.5.640">
    <property type="entry name" value="Single helix bin"/>
    <property type="match status" value="1"/>
</dbReference>
<dbReference type="HAMAP" id="MF_00340">
    <property type="entry name" value="Ribosomal_bL32"/>
    <property type="match status" value="1"/>
</dbReference>
<dbReference type="InterPro" id="IPR002677">
    <property type="entry name" value="Ribosomal_bL32"/>
</dbReference>
<dbReference type="InterPro" id="IPR044958">
    <property type="entry name" value="Ribosomal_bL32_plant/cyanobact"/>
</dbReference>
<dbReference type="InterPro" id="IPR011332">
    <property type="entry name" value="Ribosomal_zn-bd"/>
</dbReference>
<dbReference type="PANTHER" id="PTHR36083">
    <property type="entry name" value="50S RIBOSOMAL PROTEIN L32, CHLOROPLASTIC"/>
    <property type="match status" value="1"/>
</dbReference>
<dbReference type="PANTHER" id="PTHR36083:SF1">
    <property type="entry name" value="LARGE RIBOSOMAL SUBUNIT PROTEIN BL32C"/>
    <property type="match status" value="1"/>
</dbReference>
<dbReference type="Pfam" id="PF01783">
    <property type="entry name" value="Ribosomal_L32p"/>
    <property type="match status" value="1"/>
</dbReference>
<dbReference type="SUPFAM" id="SSF57829">
    <property type="entry name" value="Zn-binding ribosomal proteins"/>
    <property type="match status" value="1"/>
</dbReference>
<comment type="similarity">
    <text evidence="1">Belongs to the bacterial ribosomal protein bL32 family.</text>
</comment>
<name>RL32_THEVB</name>
<sequence>MACPKKKTSKSKRSMRRAAWKRQAALQAQRALSIGKSILTERAQGFYFPEAEEENEDEQE</sequence>
<protein>
    <recommendedName>
        <fullName evidence="1">Large ribosomal subunit protein bL32</fullName>
    </recommendedName>
    <alternativeName>
        <fullName evidence="3">50S ribosomal protein L32</fullName>
    </alternativeName>
</protein>
<proteinExistence type="inferred from homology"/>
<organism>
    <name type="scientific">Thermosynechococcus vestitus (strain NIES-2133 / IAM M-273 / BP-1)</name>
    <dbReference type="NCBI Taxonomy" id="197221"/>
    <lineage>
        <taxon>Bacteria</taxon>
        <taxon>Bacillati</taxon>
        <taxon>Cyanobacteriota</taxon>
        <taxon>Cyanophyceae</taxon>
        <taxon>Acaryochloridales</taxon>
        <taxon>Thermosynechococcaceae</taxon>
        <taxon>Thermosynechococcus</taxon>
    </lineage>
</organism>
<reference key="1">
    <citation type="journal article" date="2002" name="DNA Res.">
        <title>Complete genome structure of the thermophilic cyanobacterium Thermosynechococcus elongatus BP-1.</title>
        <authorList>
            <person name="Nakamura Y."/>
            <person name="Kaneko T."/>
            <person name="Sato S."/>
            <person name="Ikeuchi M."/>
            <person name="Katoh H."/>
            <person name="Sasamoto S."/>
            <person name="Watanabe A."/>
            <person name="Iriguchi M."/>
            <person name="Kawashima K."/>
            <person name="Kimura T."/>
            <person name="Kishida Y."/>
            <person name="Kiyokawa C."/>
            <person name="Kohara M."/>
            <person name="Matsumoto M."/>
            <person name="Matsuno A."/>
            <person name="Nakazaki N."/>
            <person name="Shimpo S."/>
            <person name="Sugimoto M."/>
            <person name="Takeuchi C."/>
            <person name="Yamada M."/>
            <person name="Tabata S."/>
        </authorList>
    </citation>
    <scope>NUCLEOTIDE SEQUENCE [LARGE SCALE GENOMIC DNA]</scope>
    <source>
        <strain>NIES-2133 / IAM M-273 / BP-1</strain>
    </source>
</reference>
<gene>
    <name evidence="1" type="primary">rpmF</name>
    <name evidence="1" type="synonym">rpl32</name>
    <name type="ordered locus">tsr1915</name>
</gene>
<keyword id="KW-1185">Reference proteome</keyword>
<keyword id="KW-0687">Ribonucleoprotein</keyword>
<keyword id="KW-0689">Ribosomal protein</keyword>